<keyword id="KW-0285">Flavoprotein</keyword>
<keyword id="KW-0288">FMN</keyword>
<keyword id="KW-0520">NAD</keyword>
<keyword id="KW-0560">Oxidoreductase</keyword>
<protein>
    <recommendedName>
        <fullName evidence="1">FMN-dependent NADH:quinone oxidoreductase</fullName>
        <ecNumber evidence="1">1.6.5.-</ecNumber>
    </recommendedName>
    <alternativeName>
        <fullName evidence="1">Azo-dye reductase</fullName>
    </alternativeName>
    <alternativeName>
        <fullName evidence="1">FMN-dependent NADH-azo compound oxidoreductase</fullName>
    </alternativeName>
    <alternativeName>
        <fullName evidence="1">FMN-dependent NADH-azoreductase</fullName>
        <ecNumber evidence="1">1.7.1.17</ecNumber>
    </alternativeName>
</protein>
<proteinExistence type="inferred from homology"/>
<gene>
    <name evidence="1" type="primary">azoR</name>
    <name type="ordered locus">BURPS1710b_3581</name>
</gene>
<reference key="1">
    <citation type="journal article" date="2010" name="Genome Biol. Evol.">
        <title>Continuing evolution of Burkholderia mallei through genome reduction and large-scale rearrangements.</title>
        <authorList>
            <person name="Losada L."/>
            <person name="Ronning C.M."/>
            <person name="DeShazer D."/>
            <person name="Woods D."/>
            <person name="Fedorova N."/>
            <person name="Kim H.S."/>
            <person name="Shabalina S.A."/>
            <person name="Pearson T.R."/>
            <person name="Brinkac L."/>
            <person name="Tan P."/>
            <person name="Nandi T."/>
            <person name="Crabtree J."/>
            <person name="Badger J."/>
            <person name="Beckstrom-Sternberg S."/>
            <person name="Saqib M."/>
            <person name="Schutzer S.E."/>
            <person name="Keim P."/>
            <person name="Nierman W.C."/>
        </authorList>
    </citation>
    <scope>NUCLEOTIDE SEQUENCE [LARGE SCALE GENOMIC DNA]</scope>
    <source>
        <strain>1710b</strain>
    </source>
</reference>
<dbReference type="EC" id="1.6.5.-" evidence="1"/>
<dbReference type="EC" id="1.7.1.17" evidence="1"/>
<dbReference type="EMBL" id="CP000124">
    <property type="protein sequence ID" value="ABA49570.1"/>
    <property type="molecule type" value="Genomic_DNA"/>
</dbReference>
<dbReference type="RefSeq" id="WP_004549943.1">
    <property type="nucleotide sequence ID" value="NC_007434.1"/>
</dbReference>
<dbReference type="SMR" id="Q3JNA7"/>
<dbReference type="EnsemblBacteria" id="ABA49570">
    <property type="protein sequence ID" value="ABA49570"/>
    <property type="gene ID" value="BURPS1710b_3581"/>
</dbReference>
<dbReference type="KEGG" id="bpm:BURPS1710b_3581"/>
<dbReference type="HOGENOM" id="CLU_088964_0_0_4"/>
<dbReference type="Proteomes" id="UP000002700">
    <property type="component" value="Chromosome I"/>
</dbReference>
<dbReference type="GO" id="GO:0009055">
    <property type="term" value="F:electron transfer activity"/>
    <property type="evidence" value="ECO:0007669"/>
    <property type="project" value="UniProtKB-UniRule"/>
</dbReference>
<dbReference type="GO" id="GO:0010181">
    <property type="term" value="F:FMN binding"/>
    <property type="evidence" value="ECO:0007669"/>
    <property type="project" value="UniProtKB-UniRule"/>
</dbReference>
<dbReference type="GO" id="GO:0016652">
    <property type="term" value="F:oxidoreductase activity, acting on NAD(P)H as acceptor"/>
    <property type="evidence" value="ECO:0007669"/>
    <property type="project" value="UniProtKB-UniRule"/>
</dbReference>
<dbReference type="GO" id="GO:0016655">
    <property type="term" value="F:oxidoreductase activity, acting on NAD(P)H, quinone or similar compound as acceptor"/>
    <property type="evidence" value="ECO:0007669"/>
    <property type="project" value="InterPro"/>
</dbReference>
<dbReference type="Gene3D" id="3.40.50.360">
    <property type="match status" value="1"/>
</dbReference>
<dbReference type="HAMAP" id="MF_01216">
    <property type="entry name" value="Azoreductase_type1"/>
    <property type="match status" value="1"/>
</dbReference>
<dbReference type="InterPro" id="IPR003680">
    <property type="entry name" value="Flavodoxin_fold"/>
</dbReference>
<dbReference type="InterPro" id="IPR029039">
    <property type="entry name" value="Flavoprotein-like_sf"/>
</dbReference>
<dbReference type="InterPro" id="IPR050104">
    <property type="entry name" value="FMN-dep_NADH:Q_OxRdtase_AzoR1"/>
</dbReference>
<dbReference type="InterPro" id="IPR023048">
    <property type="entry name" value="NADH:quinone_OxRdtase_FMN_depd"/>
</dbReference>
<dbReference type="PANTHER" id="PTHR43741">
    <property type="entry name" value="FMN-DEPENDENT NADH-AZOREDUCTASE 1"/>
    <property type="match status" value="1"/>
</dbReference>
<dbReference type="PANTHER" id="PTHR43741:SF2">
    <property type="entry name" value="FMN-DEPENDENT NADH:QUINONE OXIDOREDUCTASE"/>
    <property type="match status" value="1"/>
</dbReference>
<dbReference type="Pfam" id="PF02525">
    <property type="entry name" value="Flavodoxin_2"/>
    <property type="match status" value="1"/>
</dbReference>
<dbReference type="SUPFAM" id="SSF52218">
    <property type="entry name" value="Flavoproteins"/>
    <property type="match status" value="1"/>
</dbReference>
<name>AZOR_BURP1</name>
<feature type="chain" id="PRO_0000245900" description="FMN-dependent NADH:quinone oxidoreductase">
    <location>
        <begin position="1"/>
        <end position="198"/>
    </location>
</feature>
<feature type="binding site" evidence="1">
    <location>
        <begin position="96"/>
        <end position="99"/>
    </location>
    <ligand>
        <name>FMN</name>
        <dbReference type="ChEBI" id="CHEBI:58210"/>
    </ligand>
</feature>
<sequence length="198" mass="20862">MTTILQINSAARSQGAQSTLLADELTAKLQQGNPGATVKVRNLLADALPHLDDAVLGAFFTPADQRSAEQNAIVAKSDELVDELRSADVIVIGAPMYNFGVSSQLKAYFDWIARAGVTFRYTSEGPEGLIKGKKAYVVSARGGKHVGMPTDSQTPFLKTFLGFIGLTDVTFVYAEGLALGPDAATEALASAREAIAAV</sequence>
<accession>Q3JNA7</accession>
<evidence type="ECO:0000255" key="1">
    <source>
        <dbReference type="HAMAP-Rule" id="MF_01216"/>
    </source>
</evidence>
<comment type="function">
    <text evidence="1">Quinone reductase that provides resistance to thiol-specific stress caused by electrophilic quinones.</text>
</comment>
<comment type="function">
    <text evidence="1">Also exhibits azoreductase activity. Catalyzes the reductive cleavage of the azo bond in aromatic azo compounds to the corresponding amines.</text>
</comment>
<comment type="catalytic activity">
    <reaction evidence="1">
        <text>2 a quinone + NADH + H(+) = 2 a 1,4-benzosemiquinone + NAD(+)</text>
        <dbReference type="Rhea" id="RHEA:65952"/>
        <dbReference type="ChEBI" id="CHEBI:15378"/>
        <dbReference type="ChEBI" id="CHEBI:57540"/>
        <dbReference type="ChEBI" id="CHEBI:57945"/>
        <dbReference type="ChEBI" id="CHEBI:132124"/>
        <dbReference type="ChEBI" id="CHEBI:134225"/>
    </reaction>
</comment>
<comment type="catalytic activity">
    <reaction evidence="1">
        <text>N,N-dimethyl-1,4-phenylenediamine + anthranilate + 2 NAD(+) = 2-(4-dimethylaminophenyl)diazenylbenzoate + 2 NADH + 2 H(+)</text>
        <dbReference type="Rhea" id="RHEA:55872"/>
        <dbReference type="ChEBI" id="CHEBI:15378"/>
        <dbReference type="ChEBI" id="CHEBI:15783"/>
        <dbReference type="ChEBI" id="CHEBI:16567"/>
        <dbReference type="ChEBI" id="CHEBI:57540"/>
        <dbReference type="ChEBI" id="CHEBI:57945"/>
        <dbReference type="ChEBI" id="CHEBI:71579"/>
        <dbReference type="EC" id="1.7.1.17"/>
    </reaction>
</comment>
<comment type="cofactor">
    <cofactor evidence="1">
        <name>FMN</name>
        <dbReference type="ChEBI" id="CHEBI:58210"/>
    </cofactor>
    <text evidence="1">Binds 1 FMN per subunit.</text>
</comment>
<comment type="subunit">
    <text evidence="1">Homodimer.</text>
</comment>
<comment type="similarity">
    <text evidence="1">Belongs to the azoreductase type 1 family.</text>
</comment>
<organism>
    <name type="scientific">Burkholderia pseudomallei (strain 1710b)</name>
    <dbReference type="NCBI Taxonomy" id="320372"/>
    <lineage>
        <taxon>Bacteria</taxon>
        <taxon>Pseudomonadati</taxon>
        <taxon>Pseudomonadota</taxon>
        <taxon>Betaproteobacteria</taxon>
        <taxon>Burkholderiales</taxon>
        <taxon>Burkholderiaceae</taxon>
        <taxon>Burkholderia</taxon>
        <taxon>pseudomallei group</taxon>
    </lineage>
</organism>